<reference key="1">
    <citation type="journal article" date="2011" name="J. Bacteriol.">
        <title>Comparative genomics of 28 Salmonella enterica isolates: evidence for CRISPR-mediated adaptive sublineage evolution.</title>
        <authorList>
            <person name="Fricke W.F."/>
            <person name="Mammel M.K."/>
            <person name="McDermott P.F."/>
            <person name="Tartera C."/>
            <person name="White D.G."/>
            <person name="Leclerc J.E."/>
            <person name="Ravel J."/>
            <person name="Cebula T.A."/>
        </authorList>
    </citation>
    <scope>NUCLEOTIDE SEQUENCE [LARGE SCALE GENOMIC DNA]</scope>
    <source>
        <strain>CT_02021853</strain>
    </source>
</reference>
<protein>
    <recommendedName>
        <fullName evidence="1">Der GTPase-activating protein YihI</fullName>
    </recommendedName>
</protein>
<feature type="chain" id="PRO_1000136389" description="Der GTPase-activating protein YihI">
    <location>
        <begin position="1"/>
        <end position="171"/>
    </location>
</feature>
<feature type="region of interest" description="Disordered" evidence="2">
    <location>
        <begin position="1"/>
        <end position="99"/>
    </location>
</feature>
<feature type="region of interest" description="Disordered" evidence="2">
    <location>
        <begin position="145"/>
        <end position="171"/>
    </location>
</feature>
<feature type="compositionally biased region" description="Basic and acidic residues" evidence="2">
    <location>
        <begin position="20"/>
        <end position="30"/>
    </location>
</feature>
<feature type="compositionally biased region" description="Basic residues" evidence="2">
    <location>
        <begin position="31"/>
        <end position="40"/>
    </location>
</feature>
<feature type="compositionally biased region" description="Acidic residues" evidence="2">
    <location>
        <begin position="147"/>
        <end position="160"/>
    </location>
</feature>
<accession>B5FNZ3</accession>
<comment type="function">
    <text evidence="1">A GTPase-activating protein (GAP) that modifies Der/EngA GTPase function. May play a role in ribosome biogenesis.</text>
</comment>
<comment type="subunit">
    <text evidence="1">Interacts with Der.</text>
</comment>
<comment type="similarity">
    <text evidence="1">Belongs to the YihI family.</text>
</comment>
<sequence length="171" mass="19213">MKKPTSAPRSKAFGKQRRKTREELNQEARDRKRLKKHRGHAPGSRAAGGNSASGGGNQNQQKDPRIGSKTPVPLGVTEKVTQQHKPKSEKPMLSPQAELDLLETDERLDALLERLEAGETLSAEDQAWVDAKLDRIDELMQKLGLSYDDDEEDDEEDEKQEDMMRLLRGGN</sequence>
<evidence type="ECO:0000255" key="1">
    <source>
        <dbReference type="HAMAP-Rule" id="MF_01058"/>
    </source>
</evidence>
<evidence type="ECO:0000256" key="2">
    <source>
        <dbReference type="SAM" id="MobiDB-lite"/>
    </source>
</evidence>
<name>YIHI_SALDC</name>
<gene>
    <name evidence="1" type="primary">yihI</name>
    <name type="ordered locus">SeD_A4392</name>
</gene>
<proteinExistence type="inferred from homology"/>
<organism>
    <name type="scientific">Salmonella dublin (strain CT_02021853)</name>
    <dbReference type="NCBI Taxonomy" id="439851"/>
    <lineage>
        <taxon>Bacteria</taxon>
        <taxon>Pseudomonadati</taxon>
        <taxon>Pseudomonadota</taxon>
        <taxon>Gammaproteobacteria</taxon>
        <taxon>Enterobacterales</taxon>
        <taxon>Enterobacteriaceae</taxon>
        <taxon>Salmonella</taxon>
    </lineage>
</organism>
<dbReference type="EMBL" id="CP001144">
    <property type="protein sequence ID" value="ACH76009.1"/>
    <property type="molecule type" value="Genomic_DNA"/>
</dbReference>
<dbReference type="RefSeq" id="WP_000743292.1">
    <property type="nucleotide sequence ID" value="NC_011205.1"/>
</dbReference>
<dbReference type="SMR" id="B5FNZ3"/>
<dbReference type="KEGG" id="sed:SeD_A4392"/>
<dbReference type="HOGENOM" id="CLU_094104_2_0_6"/>
<dbReference type="Proteomes" id="UP000008322">
    <property type="component" value="Chromosome"/>
</dbReference>
<dbReference type="GO" id="GO:0005096">
    <property type="term" value="F:GTPase activator activity"/>
    <property type="evidence" value="ECO:0007669"/>
    <property type="project" value="UniProtKB-KW"/>
</dbReference>
<dbReference type="GO" id="GO:0042254">
    <property type="term" value="P:ribosome biogenesis"/>
    <property type="evidence" value="ECO:0007669"/>
    <property type="project" value="UniProtKB-KW"/>
</dbReference>
<dbReference type="HAMAP" id="MF_01058">
    <property type="entry name" value="GAP_YihI"/>
    <property type="match status" value="1"/>
</dbReference>
<dbReference type="InterPro" id="IPR007336">
    <property type="entry name" value="YihI"/>
</dbReference>
<dbReference type="NCBIfam" id="NF003560">
    <property type="entry name" value="PRK05244.1-1"/>
    <property type="match status" value="1"/>
</dbReference>
<dbReference type="Pfam" id="PF04220">
    <property type="entry name" value="YihI"/>
    <property type="match status" value="1"/>
</dbReference>
<keyword id="KW-0343">GTPase activation</keyword>
<keyword id="KW-0690">Ribosome biogenesis</keyword>